<reference key="1">
    <citation type="journal article" date="2002" name="Proc. Natl. Acad. Sci. U.S.A.">
        <title>Genome sequence and comparative microarray analysis of serotype M18 group A Streptococcus strains associated with acute rheumatic fever outbreaks.</title>
        <authorList>
            <person name="Smoot J.C."/>
            <person name="Barbian K.D."/>
            <person name="Van Gompel J.J."/>
            <person name="Smoot L.M."/>
            <person name="Chaussee M.S."/>
            <person name="Sylva G.L."/>
            <person name="Sturdevant D.E."/>
            <person name="Ricklefs S.M."/>
            <person name="Porcella S.F."/>
            <person name="Parkins L.D."/>
            <person name="Beres S.B."/>
            <person name="Campbell D.S."/>
            <person name="Smith T.M."/>
            <person name="Zhang Q."/>
            <person name="Kapur V."/>
            <person name="Daly J.A."/>
            <person name="Veasy L.G."/>
            <person name="Musser J.M."/>
        </authorList>
    </citation>
    <scope>NUCLEOTIDE SEQUENCE [LARGE SCALE GENOMIC DNA]</scope>
    <source>
        <strain>MGAS8232</strain>
    </source>
</reference>
<accession>Q8NZH6</accession>
<sequence>MRYNQFSYIPTSLERAAEELKELGFDLDLQKTAKANLESFLRKLFFHYPDSDYPLSHLIAKNDMDALSFFQSEQELSKEVFDLLALQVLGFIPGVDFTEADAFLDKLAFPIHFDETEIIKHIHHLLATRCKSGMTLIDDLVSQGMLTMDNDYHFFNGKSLATFDTSQLIREVVYVEAPLDTDQDGQLDLIKVNIIRPQSQKPLPTLMTPSPYHQGINEVANDKKLYRMEKELVVKKRRQITVEDRDFIPLETQPCKLPIGQNLESFSYINSYSLNDYFLARGFANIYVSGVGTAGSTGFMTSGDYAQIESFKAVIDWLNRRATAYTSHSKTHQVRADWANGLVCTTGKSYLGTMSTGLATTGVDGLAMIIAESAISSWYNYYRENGLVCSPGGYPGEDLDVLTELTYSRNLLAGDYLRHNDRYQELLNQQSQALDRQSGDYNQFWHDRNYLKNAHQIKCDVVYTHGLQDWNVKPRQVYEIFNALPSTINKHLFLHQGEHVYMHNWQSIDFRESMNALLCQKLLGLANDFSLPEMIWQDNTCPQNWQERKVFGTSTIKELDLGQELLLIDNHYGEDEFKAYGKDFRAFKAALFEGKANQALVDILLEEDLPINGEIVLQLKVKSSENKGLLSAQILDYGKKKRLGDLPIALTQSSIDNGQNFSRESLKELPFREDSYRVISKGFMNLQNRNNLSSIETIPNNKWMTVRLPLQPTIYHLEKGDTLRVILYTTDFEHTVRDNSNYALTIDLSQSQLIVPIASN</sequence>
<feature type="chain" id="PRO_0000220234" description="Xaa-Pro dipeptidyl-peptidase">
    <location>
        <begin position="1"/>
        <end position="760"/>
    </location>
</feature>
<feature type="active site" description="Charge relay system" evidence="1">
    <location>
        <position position="349"/>
    </location>
</feature>
<feature type="active site" description="Charge relay system" evidence="1">
    <location>
        <position position="469"/>
    </location>
</feature>
<feature type="active site" description="Charge relay system" evidence="1">
    <location>
        <position position="499"/>
    </location>
</feature>
<organism>
    <name type="scientific">Streptococcus pyogenes serotype M18 (strain MGAS8232)</name>
    <dbReference type="NCBI Taxonomy" id="186103"/>
    <lineage>
        <taxon>Bacteria</taxon>
        <taxon>Bacillati</taxon>
        <taxon>Bacillota</taxon>
        <taxon>Bacilli</taxon>
        <taxon>Lactobacillales</taxon>
        <taxon>Streptococcaceae</taxon>
        <taxon>Streptococcus</taxon>
    </lineage>
</organism>
<dbReference type="EC" id="3.4.14.11" evidence="1"/>
<dbReference type="EMBL" id="AE009949">
    <property type="protein sequence ID" value="AAL98421.1"/>
    <property type="molecule type" value="Genomic_DNA"/>
</dbReference>
<dbReference type="RefSeq" id="WP_011018200.1">
    <property type="nucleotide sequence ID" value="NC_003485.1"/>
</dbReference>
<dbReference type="SMR" id="Q8NZH6"/>
<dbReference type="ESTHER" id="strpy-PEPXP">
    <property type="family name" value="Lactobacillus_peptidase"/>
</dbReference>
<dbReference type="KEGG" id="spm:spyM18_1922"/>
<dbReference type="HOGENOM" id="CLU_011800_0_0_9"/>
<dbReference type="GO" id="GO:0005737">
    <property type="term" value="C:cytoplasm"/>
    <property type="evidence" value="ECO:0007669"/>
    <property type="project" value="UniProtKB-SubCell"/>
</dbReference>
<dbReference type="GO" id="GO:0004177">
    <property type="term" value="F:aminopeptidase activity"/>
    <property type="evidence" value="ECO:0007669"/>
    <property type="project" value="UniProtKB-KW"/>
</dbReference>
<dbReference type="GO" id="GO:0008239">
    <property type="term" value="F:dipeptidyl-peptidase activity"/>
    <property type="evidence" value="ECO:0007669"/>
    <property type="project" value="UniProtKB-UniRule"/>
</dbReference>
<dbReference type="GO" id="GO:0008236">
    <property type="term" value="F:serine-type peptidase activity"/>
    <property type="evidence" value="ECO:0007669"/>
    <property type="project" value="UniProtKB-KW"/>
</dbReference>
<dbReference type="GO" id="GO:0006508">
    <property type="term" value="P:proteolysis"/>
    <property type="evidence" value="ECO:0007669"/>
    <property type="project" value="UniProtKB-KW"/>
</dbReference>
<dbReference type="Gene3D" id="1.10.246.70">
    <property type="match status" value="1"/>
</dbReference>
<dbReference type="Gene3D" id="3.40.50.1820">
    <property type="entry name" value="alpha/beta hydrolase"/>
    <property type="match status" value="1"/>
</dbReference>
<dbReference type="Gene3D" id="2.60.120.260">
    <property type="entry name" value="Galactose-binding domain-like"/>
    <property type="match status" value="1"/>
</dbReference>
<dbReference type="HAMAP" id="MF_00698">
    <property type="entry name" value="Aminopeptidase_S15"/>
    <property type="match status" value="1"/>
</dbReference>
<dbReference type="InterPro" id="IPR029058">
    <property type="entry name" value="AB_hydrolase_fold"/>
</dbReference>
<dbReference type="InterPro" id="IPR008979">
    <property type="entry name" value="Galactose-bd-like_sf"/>
</dbReference>
<dbReference type="InterPro" id="IPR008252">
    <property type="entry name" value="Pept_S15_Xpro"/>
</dbReference>
<dbReference type="InterPro" id="IPR015251">
    <property type="entry name" value="PepX_N_dom"/>
</dbReference>
<dbReference type="InterPro" id="IPR036313">
    <property type="entry name" value="PepX_N_dom_sf"/>
</dbReference>
<dbReference type="InterPro" id="IPR000383">
    <property type="entry name" value="Xaa-Pro-like_dom"/>
</dbReference>
<dbReference type="InterPro" id="IPR013736">
    <property type="entry name" value="Xaa-Pro_dipept_C"/>
</dbReference>
<dbReference type="InterPro" id="IPR050585">
    <property type="entry name" value="Xaa-Pro_dipeptidyl-ppase/CocE"/>
</dbReference>
<dbReference type="NCBIfam" id="NF003783">
    <property type="entry name" value="PRK05371.1-4"/>
    <property type="match status" value="1"/>
</dbReference>
<dbReference type="PANTHER" id="PTHR43056:SF10">
    <property type="entry name" value="COCE_NOND FAMILY, PUTATIVE (AFU_ORTHOLOGUE AFUA_7G00600)-RELATED"/>
    <property type="match status" value="1"/>
</dbReference>
<dbReference type="PANTHER" id="PTHR43056">
    <property type="entry name" value="PEPTIDASE S9 PROLYL OLIGOPEPTIDASE"/>
    <property type="match status" value="1"/>
</dbReference>
<dbReference type="Pfam" id="PF02129">
    <property type="entry name" value="Peptidase_S15"/>
    <property type="match status" value="1"/>
</dbReference>
<dbReference type="Pfam" id="PF08530">
    <property type="entry name" value="PepX_C"/>
    <property type="match status" value="1"/>
</dbReference>
<dbReference type="Pfam" id="PF09168">
    <property type="entry name" value="PepX_N"/>
    <property type="match status" value="1"/>
</dbReference>
<dbReference type="PRINTS" id="PR00923">
    <property type="entry name" value="LACTOPTASE"/>
</dbReference>
<dbReference type="SMART" id="SM00939">
    <property type="entry name" value="PepX_C"/>
    <property type="match status" value="1"/>
</dbReference>
<dbReference type="SMART" id="SM00940">
    <property type="entry name" value="PepX_N"/>
    <property type="match status" value="1"/>
</dbReference>
<dbReference type="SUPFAM" id="SSF53474">
    <property type="entry name" value="alpha/beta-Hydrolases"/>
    <property type="match status" value="1"/>
</dbReference>
<dbReference type="SUPFAM" id="SSF49785">
    <property type="entry name" value="Galactose-binding domain-like"/>
    <property type="match status" value="1"/>
</dbReference>
<dbReference type="SUPFAM" id="SSF81761">
    <property type="entry name" value="X-Prolyl dipeptidyl aminopeptidase PepX, N-terminal domain"/>
    <property type="match status" value="1"/>
</dbReference>
<protein>
    <recommendedName>
        <fullName evidence="1">Xaa-Pro dipeptidyl-peptidase</fullName>
        <ecNumber evidence="1">3.4.14.11</ecNumber>
    </recommendedName>
    <alternativeName>
        <fullName evidence="1">X-Pro dipeptidyl-peptidase</fullName>
    </alternativeName>
    <alternativeName>
        <fullName evidence="1">X-prolyl-dipeptidyl aminopeptidase</fullName>
        <shortName evidence="1">X-PDAP</shortName>
    </alternativeName>
</protein>
<evidence type="ECO:0000255" key="1">
    <source>
        <dbReference type="HAMAP-Rule" id="MF_00698"/>
    </source>
</evidence>
<proteinExistence type="inferred from homology"/>
<gene>
    <name evidence="1" type="primary">pepX</name>
    <name type="ordered locus">spyM18_1922</name>
</gene>
<keyword id="KW-0031">Aminopeptidase</keyword>
<keyword id="KW-0963">Cytoplasm</keyword>
<keyword id="KW-0378">Hydrolase</keyword>
<keyword id="KW-0645">Protease</keyword>
<keyword id="KW-0720">Serine protease</keyword>
<comment type="function">
    <text evidence="1">Removes N-terminal dipeptides sequentially from polypeptides having unsubstituted N-termini provided that the penultimate residue is proline.</text>
</comment>
<comment type="catalytic activity">
    <reaction evidence="1">
        <text>Hydrolyzes Xaa-Pro-|- bonds to release unblocked, N-terminal dipeptides from substrates including Ala-Pro-|-p-nitroanilide and (sequentially) Tyr-Pro-|-Phe-Pro-|-Gly-Pro-|-Ile.</text>
        <dbReference type="EC" id="3.4.14.11"/>
    </reaction>
</comment>
<comment type="subunit">
    <text evidence="1">Homodimer.</text>
</comment>
<comment type="subcellular location">
    <subcellularLocation>
        <location evidence="1">Cytoplasm</location>
    </subcellularLocation>
</comment>
<comment type="similarity">
    <text evidence="1">Belongs to the peptidase S15 family.</text>
</comment>
<name>PEPX_STRP8</name>